<organism>
    <name type="scientific">Brucella anthropi</name>
    <name type="common">Ochrobactrum anthropi</name>
    <dbReference type="NCBI Taxonomy" id="529"/>
    <lineage>
        <taxon>Bacteria</taxon>
        <taxon>Pseudomonadati</taxon>
        <taxon>Pseudomonadota</taxon>
        <taxon>Alphaproteobacteria</taxon>
        <taxon>Hyphomicrobiales</taxon>
        <taxon>Brucellaceae</taxon>
        <taxon>Brucella/Ochrobactrum group</taxon>
        <taxon>Brucella</taxon>
    </lineage>
</organism>
<evidence type="ECO:0000255" key="1">
    <source>
        <dbReference type="HAMAP-Rule" id="MF_01401"/>
    </source>
</evidence>
<dbReference type="EC" id="1.8.4.11" evidence="1"/>
<dbReference type="EMBL" id="AJ312185">
    <property type="protein sequence ID" value="CAC39251.1"/>
    <property type="molecule type" value="Genomic_DNA"/>
</dbReference>
<dbReference type="RefSeq" id="WP_010659379.1">
    <property type="nucleotide sequence ID" value="NZ_WBWX01000001.1"/>
</dbReference>
<dbReference type="SMR" id="Q93S39"/>
<dbReference type="GeneID" id="61318186"/>
<dbReference type="GO" id="GO:0005737">
    <property type="term" value="C:cytoplasm"/>
    <property type="evidence" value="ECO:0007669"/>
    <property type="project" value="TreeGrafter"/>
</dbReference>
<dbReference type="GO" id="GO:0036456">
    <property type="term" value="F:L-methionine-(S)-S-oxide reductase activity"/>
    <property type="evidence" value="ECO:0007669"/>
    <property type="project" value="TreeGrafter"/>
</dbReference>
<dbReference type="GO" id="GO:0008113">
    <property type="term" value="F:peptide-methionine (S)-S-oxide reductase activity"/>
    <property type="evidence" value="ECO:0007669"/>
    <property type="project" value="UniProtKB-UniRule"/>
</dbReference>
<dbReference type="GO" id="GO:0034599">
    <property type="term" value="P:cellular response to oxidative stress"/>
    <property type="evidence" value="ECO:0007669"/>
    <property type="project" value="TreeGrafter"/>
</dbReference>
<dbReference type="GO" id="GO:0036211">
    <property type="term" value="P:protein modification process"/>
    <property type="evidence" value="ECO:0007669"/>
    <property type="project" value="UniProtKB-UniRule"/>
</dbReference>
<dbReference type="FunFam" id="3.30.1060.10:FF:000001">
    <property type="entry name" value="Peptide methionine sulfoxide reductase MsrA"/>
    <property type="match status" value="1"/>
</dbReference>
<dbReference type="Gene3D" id="3.30.1060.10">
    <property type="entry name" value="Peptide methionine sulphoxide reductase MsrA"/>
    <property type="match status" value="1"/>
</dbReference>
<dbReference type="HAMAP" id="MF_01401">
    <property type="entry name" value="MsrA"/>
    <property type="match status" value="1"/>
</dbReference>
<dbReference type="InterPro" id="IPR002569">
    <property type="entry name" value="Met_Sox_Rdtase_MsrA_dom"/>
</dbReference>
<dbReference type="InterPro" id="IPR036509">
    <property type="entry name" value="Met_Sox_Rdtase_MsrA_sf"/>
</dbReference>
<dbReference type="InterPro" id="IPR050162">
    <property type="entry name" value="MsrA_MetSO_reductase"/>
</dbReference>
<dbReference type="NCBIfam" id="TIGR00401">
    <property type="entry name" value="msrA"/>
    <property type="match status" value="1"/>
</dbReference>
<dbReference type="PANTHER" id="PTHR42799">
    <property type="entry name" value="MITOCHONDRIAL PEPTIDE METHIONINE SULFOXIDE REDUCTASE"/>
    <property type="match status" value="1"/>
</dbReference>
<dbReference type="PANTHER" id="PTHR42799:SF2">
    <property type="entry name" value="MITOCHONDRIAL PEPTIDE METHIONINE SULFOXIDE REDUCTASE"/>
    <property type="match status" value="1"/>
</dbReference>
<dbReference type="Pfam" id="PF01625">
    <property type="entry name" value="PMSR"/>
    <property type="match status" value="1"/>
</dbReference>
<dbReference type="SUPFAM" id="SSF55068">
    <property type="entry name" value="Peptide methionine sulfoxide reductase"/>
    <property type="match status" value="1"/>
</dbReference>
<gene>
    <name evidence="1" type="primary">msrA</name>
</gene>
<proteinExistence type="evidence at transcript level"/>
<protein>
    <recommendedName>
        <fullName evidence="1">Peptide methionine sulfoxide reductase MsrA</fullName>
        <shortName evidence="1">Protein-methionine-S-oxide reductase</shortName>
        <ecNumber evidence="1">1.8.4.11</ecNumber>
    </recommendedName>
    <alternativeName>
        <fullName evidence="1">Peptide-methionine (S)-S-oxide reductase</fullName>
        <shortName evidence="1">Peptide Met(O) reductase</shortName>
    </alternativeName>
</protein>
<sequence>MSFLDSYRKKTLMPSTDEALPGRAQPIPTSATHFVNSRPLKEPWPEGYKQVLFGMGCFWGAERLFWQVPGVYVTAVGYAGGVTPNPTYEETCTGLTGHAEVVLVVYDPKVVSLDELLTLFWEEHDPTQGMRQGNDIGTTYRSVIYTFDKADRDVAEKSREAYSQALAGRGLGPITTEIEDAPELYYAEDYHQQYLAKNPNGYCGLRGTGVSCPIPLAQ</sequence>
<reference key="1">
    <citation type="journal article" date="2001" name="Biochem. J.">
        <title>Bacterial peptide methionine sulphoxide reductase: co-induction with glutathione S-transferase during chemical stress conditions.</title>
        <authorList>
            <person name="Tamburro A."/>
            <person name="Allocati N."/>
            <person name="Masulli M."/>
            <person name="Rotilio D."/>
            <person name="Di Ilio C."/>
            <person name="Favaloro B."/>
        </authorList>
    </citation>
    <scope>NUCLEOTIDE SEQUENCE [GENOMIC DNA]</scope>
</reference>
<comment type="function">
    <text evidence="1">Has an important function as a repair enzyme for proteins that have been inactivated by oxidation. Catalyzes the reversible oxidation-reduction of methionine sulfoxide in proteins to methionine.</text>
</comment>
<comment type="catalytic activity">
    <reaction evidence="1">
        <text>L-methionyl-[protein] + [thioredoxin]-disulfide + H2O = L-methionyl-(S)-S-oxide-[protein] + [thioredoxin]-dithiol</text>
        <dbReference type="Rhea" id="RHEA:14217"/>
        <dbReference type="Rhea" id="RHEA-COMP:10698"/>
        <dbReference type="Rhea" id="RHEA-COMP:10700"/>
        <dbReference type="Rhea" id="RHEA-COMP:12313"/>
        <dbReference type="Rhea" id="RHEA-COMP:12315"/>
        <dbReference type="ChEBI" id="CHEBI:15377"/>
        <dbReference type="ChEBI" id="CHEBI:16044"/>
        <dbReference type="ChEBI" id="CHEBI:29950"/>
        <dbReference type="ChEBI" id="CHEBI:44120"/>
        <dbReference type="ChEBI" id="CHEBI:50058"/>
        <dbReference type="EC" id="1.8.4.11"/>
    </reaction>
</comment>
<comment type="catalytic activity">
    <reaction evidence="1">
        <text>[thioredoxin]-disulfide + L-methionine + H2O = L-methionine (S)-S-oxide + [thioredoxin]-dithiol</text>
        <dbReference type="Rhea" id="RHEA:19993"/>
        <dbReference type="Rhea" id="RHEA-COMP:10698"/>
        <dbReference type="Rhea" id="RHEA-COMP:10700"/>
        <dbReference type="ChEBI" id="CHEBI:15377"/>
        <dbReference type="ChEBI" id="CHEBI:29950"/>
        <dbReference type="ChEBI" id="CHEBI:50058"/>
        <dbReference type="ChEBI" id="CHEBI:57844"/>
        <dbReference type="ChEBI" id="CHEBI:58772"/>
        <dbReference type="EC" id="1.8.4.11"/>
    </reaction>
</comment>
<comment type="induction">
    <text>Induced by phenol and 4-chlorophenol but not by hydrogen peroxide.</text>
</comment>
<comment type="miscellaneous">
    <text>Active on the S and R isomers of MetO.</text>
</comment>
<comment type="similarity">
    <text evidence="1">Belongs to the MsrA Met sulfoxide reductase family.</text>
</comment>
<name>MSRA_BRUAN</name>
<keyword id="KW-0560">Oxidoreductase</keyword>
<feature type="chain" id="PRO_0000138562" description="Peptide methionine sulfoxide reductase MsrA">
    <location>
        <begin position="1"/>
        <end position="218"/>
    </location>
</feature>
<feature type="active site" evidence="1">
    <location>
        <position position="57"/>
    </location>
</feature>
<accession>Q93S39</accession>